<accession>A4SYU8</accession>
<feature type="chain" id="PRO_1000074590" description="Ribosome-recycling factor">
    <location>
        <begin position="1"/>
        <end position="186"/>
    </location>
</feature>
<proteinExistence type="inferred from homology"/>
<sequence>MSAAEIKTNTDQKMQKSLESLKSSLAKIRSGRANPGILEHIHVDYYGNPTPLSQVASLGLADARTINVQPFEKTMVAAVEKAIRDSDLGLNPASQGTVIRVPMPALTEERRRELTKVVKSEGEDTKIAVRNLRRDANEHLKRLTKDKEISEDEERRATDEIQKMTDKAVVDIDKIIVEKEKEIMTV</sequence>
<gene>
    <name evidence="1" type="primary">frr</name>
    <name type="ordered locus">Pnuc_1448</name>
</gene>
<comment type="function">
    <text evidence="1">Responsible for the release of ribosomes from messenger RNA at the termination of protein biosynthesis. May increase the efficiency of translation by recycling ribosomes from one round of translation to another.</text>
</comment>
<comment type="subcellular location">
    <subcellularLocation>
        <location evidence="1">Cytoplasm</location>
    </subcellularLocation>
</comment>
<comment type="similarity">
    <text evidence="1">Belongs to the RRF family.</text>
</comment>
<keyword id="KW-0963">Cytoplasm</keyword>
<keyword id="KW-0648">Protein biosynthesis</keyword>
<keyword id="KW-1185">Reference proteome</keyword>
<dbReference type="EMBL" id="CP000655">
    <property type="protein sequence ID" value="ABP34662.1"/>
    <property type="molecule type" value="Genomic_DNA"/>
</dbReference>
<dbReference type="RefSeq" id="WP_011903285.1">
    <property type="nucleotide sequence ID" value="NC_009379.1"/>
</dbReference>
<dbReference type="SMR" id="A4SYU8"/>
<dbReference type="GeneID" id="31481838"/>
<dbReference type="KEGG" id="pnu:Pnuc_1448"/>
<dbReference type="eggNOG" id="COG0233">
    <property type="taxonomic scope" value="Bacteria"/>
</dbReference>
<dbReference type="HOGENOM" id="CLU_073981_2_1_4"/>
<dbReference type="Proteomes" id="UP000000231">
    <property type="component" value="Chromosome"/>
</dbReference>
<dbReference type="GO" id="GO:0005829">
    <property type="term" value="C:cytosol"/>
    <property type="evidence" value="ECO:0007669"/>
    <property type="project" value="GOC"/>
</dbReference>
<dbReference type="GO" id="GO:0043023">
    <property type="term" value="F:ribosomal large subunit binding"/>
    <property type="evidence" value="ECO:0007669"/>
    <property type="project" value="TreeGrafter"/>
</dbReference>
<dbReference type="GO" id="GO:0002184">
    <property type="term" value="P:cytoplasmic translational termination"/>
    <property type="evidence" value="ECO:0007669"/>
    <property type="project" value="TreeGrafter"/>
</dbReference>
<dbReference type="CDD" id="cd00520">
    <property type="entry name" value="RRF"/>
    <property type="match status" value="1"/>
</dbReference>
<dbReference type="FunFam" id="1.10.132.20:FF:000001">
    <property type="entry name" value="Ribosome-recycling factor"/>
    <property type="match status" value="1"/>
</dbReference>
<dbReference type="FunFam" id="3.30.1360.40:FF:000001">
    <property type="entry name" value="Ribosome-recycling factor"/>
    <property type="match status" value="1"/>
</dbReference>
<dbReference type="Gene3D" id="3.30.1360.40">
    <property type="match status" value="1"/>
</dbReference>
<dbReference type="Gene3D" id="1.10.132.20">
    <property type="entry name" value="Ribosome-recycling factor"/>
    <property type="match status" value="1"/>
</dbReference>
<dbReference type="HAMAP" id="MF_00040">
    <property type="entry name" value="RRF"/>
    <property type="match status" value="1"/>
</dbReference>
<dbReference type="InterPro" id="IPR002661">
    <property type="entry name" value="Ribosome_recyc_fac"/>
</dbReference>
<dbReference type="InterPro" id="IPR023584">
    <property type="entry name" value="Ribosome_recyc_fac_dom"/>
</dbReference>
<dbReference type="InterPro" id="IPR036191">
    <property type="entry name" value="RRF_sf"/>
</dbReference>
<dbReference type="NCBIfam" id="TIGR00496">
    <property type="entry name" value="frr"/>
    <property type="match status" value="1"/>
</dbReference>
<dbReference type="PANTHER" id="PTHR20982:SF3">
    <property type="entry name" value="MITOCHONDRIAL RIBOSOME RECYCLING FACTOR PSEUDO 1"/>
    <property type="match status" value="1"/>
</dbReference>
<dbReference type="PANTHER" id="PTHR20982">
    <property type="entry name" value="RIBOSOME RECYCLING FACTOR"/>
    <property type="match status" value="1"/>
</dbReference>
<dbReference type="Pfam" id="PF01765">
    <property type="entry name" value="RRF"/>
    <property type="match status" value="1"/>
</dbReference>
<dbReference type="SUPFAM" id="SSF55194">
    <property type="entry name" value="Ribosome recycling factor, RRF"/>
    <property type="match status" value="1"/>
</dbReference>
<reference key="1">
    <citation type="journal article" date="2012" name="Stand. Genomic Sci.">
        <title>Complete genome sequence of Polynucleobacter necessarius subsp. asymbioticus type strain (QLW-P1DMWA-1(T)).</title>
        <authorList>
            <person name="Meincke L."/>
            <person name="Copeland A."/>
            <person name="Lapidus A."/>
            <person name="Lucas S."/>
            <person name="Berry K.W."/>
            <person name="Del Rio T.G."/>
            <person name="Hammon N."/>
            <person name="Dalin E."/>
            <person name="Tice H."/>
            <person name="Pitluck S."/>
            <person name="Richardson P."/>
            <person name="Bruce D."/>
            <person name="Goodwin L."/>
            <person name="Han C."/>
            <person name="Tapia R."/>
            <person name="Detter J.C."/>
            <person name="Schmutz J."/>
            <person name="Brettin T."/>
            <person name="Larimer F."/>
            <person name="Land M."/>
            <person name="Hauser L."/>
            <person name="Kyrpides N.C."/>
            <person name="Ivanova N."/>
            <person name="Goker M."/>
            <person name="Woyke T."/>
            <person name="Wu Q.L."/>
            <person name="Pockl M."/>
            <person name="Hahn M.W."/>
            <person name="Klenk H.P."/>
        </authorList>
    </citation>
    <scope>NUCLEOTIDE SEQUENCE [LARGE SCALE GENOMIC DNA]</scope>
    <source>
        <strain>DSM 18221 / CIP 109841 / QLW-P1DMWA-1</strain>
    </source>
</reference>
<evidence type="ECO:0000255" key="1">
    <source>
        <dbReference type="HAMAP-Rule" id="MF_00040"/>
    </source>
</evidence>
<protein>
    <recommendedName>
        <fullName evidence="1">Ribosome-recycling factor</fullName>
        <shortName evidence="1">RRF</shortName>
    </recommendedName>
    <alternativeName>
        <fullName evidence="1">Ribosome-releasing factor</fullName>
    </alternativeName>
</protein>
<organism>
    <name type="scientific">Polynucleobacter asymbioticus (strain DSM 18221 / CIP 109841 / QLW-P1DMWA-1)</name>
    <name type="common">Polynucleobacter necessarius subsp. asymbioticus</name>
    <dbReference type="NCBI Taxonomy" id="312153"/>
    <lineage>
        <taxon>Bacteria</taxon>
        <taxon>Pseudomonadati</taxon>
        <taxon>Pseudomonadota</taxon>
        <taxon>Betaproteobacteria</taxon>
        <taxon>Burkholderiales</taxon>
        <taxon>Burkholderiaceae</taxon>
        <taxon>Polynucleobacter</taxon>
    </lineage>
</organism>
<name>RRF_POLAQ</name>